<feature type="signal peptide" evidence="1">
    <location>
        <begin position="1"/>
        <end position="21"/>
    </location>
</feature>
<feature type="propeptide" id="PRO_1000081944" evidence="1">
    <location>
        <begin position="22"/>
        <end position="58"/>
    </location>
</feature>
<feature type="chain" id="PRO_1000081945" description="Acid shock protein">
    <location>
        <begin position="59"/>
        <end position="102"/>
    </location>
</feature>
<feature type="region of interest" description="Disordered" evidence="2">
    <location>
        <begin position="21"/>
        <end position="102"/>
    </location>
</feature>
<feature type="compositionally biased region" description="Low complexity" evidence="2">
    <location>
        <begin position="21"/>
        <end position="41"/>
    </location>
</feature>
<feature type="compositionally biased region" description="Basic residues" evidence="2">
    <location>
        <begin position="80"/>
        <end position="90"/>
    </location>
</feature>
<feature type="compositionally biased region" description="Low complexity" evidence="2">
    <location>
        <begin position="91"/>
        <end position="102"/>
    </location>
</feature>
<name>ASR_ECOLC</name>
<reference key="1">
    <citation type="submission" date="2008-02" db="EMBL/GenBank/DDBJ databases">
        <title>Complete sequence of Escherichia coli C str. ATCC 8739.</title>
        <authorList>
            <person name="Copeland A."/>
            <person name="Lucas S."/>
            <person name="Lapidus A."/>
            <person name="Glavina del Rio T."/>
            <person name="Dalin E."/>
            <person name="Tice H."/>
            <person name="Bruce D."/>
            <person name="Goodwin L."/>
            <person name="Pitluck S."/>
            <person name="Kiss H."/>
            <person name="Brettin T."/>
            <person name="Detter J.C."/>
            <person name="Han C."/>
            <person name="Kuske C.R."/>
            <person name="Schmutz J."/>
            <person name="Larimer F."/>
            <person name="Land M."/>
            <person name="Hauser L."/>
            <person name="Kyrpides N."/>
            <person name="Mikhailova N."/>
            <person name="Ingram L."/>
            <person name="Richardson P."/>
        </authorList>
    </citation>
    <scope>NUCLEOTIDE SEQUENCE [LARGE SCALE GENOMIC DNA]</scope>
    <source>
        <strain>ATCC 8739 / DSM 1576 / NBRC 3972 / NCIMB 8545 / WDCM 00012 / Crooks</strain>
    </source>
</reference>
<protein>
    <recommendedName>
        <fullName evidence="1">Acid shock protein</fullName>
    </recommendedName>
</protein>
<proteinExistence type="inferred from homology"/>
<gene>
    <name evidence="1" type="primary">asr</name>
    <name type="ordered locus">EcolC_2033</name>
</gene>
<keyword id="KW-0574">Periplasm</keyword>
<keyword id="KW-0732">Signal</keyword>
<accession>B1IQZ3</accession>
<organism>
    <name type="scientific">Escherichia coli (strain ATCC 8739 / DSM 1576 / NBRC 3972 / NCIMB 8545 / WDCM 00012 / Crooks)</name>
    <dbReference type="NCBI Taxonomy" id="481805"/>
    <lineage>
        <taxon>Bacteria</taxon>
        <taxon>Pseudomonadati</taxon>
        <taxon>Pseudomonadota</taxon>
        <taxon>Gammaproteobacteria</taxon>
        <taxon>Enterobacterales</taxon>
        <taxon>Enterobacteriaceae</taxon>
        <taxon>Escherichia</taxon>
    </lineage>
</organism>
<sequence>MKKVLALVVAAAMGLSSAAFAAETTTTPAPTATTTKAAPAKTTHHKKQHKAAPAQKAQAAKKHHKNTKAEQKAPEQKAQAAKKHAKKHSHQQPAKPAAQPAA</sequence>
<evidence type="ECO:0000255" key="1">
    <source>
        <dbReference type="HAMAP-Rule" id="MF_00546"/>
    </source>
</evidence>
<evidence type="ECO:0000256" key="2">
    <source>
        <dbReference type="SAM" id="MobiDB-lite"/>
    </source>
</evidence>
<dbReference type="EMBL" id="CP000946">
    <property type="protein sequence ID" value="ACA77677.1"/>
    <property type="molecule type" value="Genomic_DNA"/>
</dbReference>
<dbReference type="RefSeq" id="WP_001340364.1">
    <property type="nucleotide sequence ID" value="NZ_MTFT01000006.1"/>
</dbReference>
<dbReference type="KEGG" id="ecl:EcolC_2033"/>
<dbReference type="HOGENOM" id="CLU_102486_2_0_6"/>
<dbReference type="GO" id="GO:0042597">
    <property type="term" value="C:periplasmic space"/>
    <property type="evidence" value="ECO:0007669"/>
    <property type="project" value="UniProtKB-SubCell"/>
</dbReference>
<dbReference type="HAMAP" id="MF_00546">
    <property type="entry name" value="Asr"/>
    <property type="match status" value="1"/>
</dbReference>
<dbReference type="InterPro" id="IPR023497">
    <property type="entry name" value="Acid_shock"/>
</dbReference>
<dbReference type="NCBIfam" id="NF033636">
    <property type="entry name" value="acid_shock_Asr"/>
    <property type="match status" value="1"/>
</dbReference>
<dbReference type="Pfam" id="PF06392">
    <property type="entry name" value="Asr"/>
    <property type="match status" value="1"/>
</dbReference>
<comment type="function">
    <text evidence="1">Required for growth and/or survival at acidic conditions.</text>
</comment>
<comment type="subcellular location">
    <subcellularLocation>
        <location evidence="1">Periplasm</location>
    </subcellularLocation>
</comment>
<comment type="PTM">
    <text evidence="1">Proteolytic processing gives rise to the active protein.</text>
</comment>
<comment type="similarity">
    <text evidence="1">Belongs to the Asr family.</text>
</comment>